<protein>
    <recommendedName>
        <fullName evidence="1">Ferrochelatase</fullName>
        <ecNumber evidence="1">4.98.1.1</ecNumber>
    </recommendedName>
    <alternativeName>
        <fullName evidence="1">Heme synthase</fullName>
    </alternativeName>
    <alternativeName>
        <fullName evidence="1">Protoheme ferro-lyase</fullName>
    </alternativeName>
</protein>
<proteinExistence type="inferred from homology"/>
<accession>Q7WGI0</accession>
<organism>
    <name type="scientific">Bordetella bronchiseptica (strain ATCC BAA-588 / NCTC 13252 / RB50)</name>
    <name type="common">Alcaligenes bronchisepticus</name>
    <dbReference type="NCBI Taxonomy" id="257310"/>
    <lineage>
        <taxon>Bacteria</taxon>
        <taxon>Pseudomonadati</taxon>
        <taxon>Pseudomonadota</taxon>
        <taxon>Betaproteobacteria</taxon>
        <taxon>Burkholderiales</taxon>
        <taxon>Alcaligenaceae</taxon>
        <taxon>Bordetella</taxon>
    </lineage>
</organism>
<dbReference type="EC" id="4.98.1.1" evidence="1"/>
<dbReference type="EMBL" id="BX640449">
    <property type="protein sequence ID" value="CAE34301.1"/>
    <property type="molecule type" value="Genomic_DNA"/>
</dbReference>
<dbReference type="RefSeq" id="WP_003814087.1">
    <property type="nucleotide sequence ID" value="NC_002927.3"/>
</dbReference>
<dbReference type="SMR" id="Q7WGI0"/>
<dbReference type="GeneID" id="56477577"/>
<dbReference type="KEGG" id="bbr:BB3938"/>
<dbReference type="eggNOG" id="COG0276">
    <property type="taxonomic scope" value="Bacteria"/>
</dbReference>
<dbReference type="HOGENOM" id="CLU_018884_0_0_4"/>
<dbReference type="UniPathway" id="UPA00252">
    <property type="reaction ID" value="UER00325"/>
</dbReference>
<dbReference type="Proteomes" id="UP000001027">
    <property type="component" value="Chromosome"/>
</dbReference>
<dbReference type="GO" id="GO:0005737">
    <property type="term" value="C:cytoplasm"/>
    <property type="evidence" value="ECO:0007669"/>
    <property type="project" value="UniProtKB-SubCell"/>
</dbReference>
<dbReference type="GO" id="GO:0004325">
    <property type="term" value="F:ferrochelatase activity"/>
    <property type="evidence" value="ECO:0007669"/>
    <property type="project" value="UniProtKB-UniRule"/>
</dbReference>
<dbReference type="GO" id="GO:0046872">
    <property type="term" value="F:metal ion binding"/>
    <property type="evidence" value="ECO:0007669"/>
    <property type="project" value="UniProtKB-KW"/>
</dbReference>
<dbReference type="GO" id="GO:0006783">
    <property type="term" value="P:heme biosynthetic process"/>
    <property type="evidence" value="ECO:0007669"/>
    <property type="project" value="UniProtKB-UniRule"/>
</dbReference>
<dbReference type="CDD" id="cd00419">
    <property type="entry name" value="Ferrochelatase_C"/>
    <property type="match status" value="1"/>
</dbReference>
<dbReference type="CDD" id="cd03411">
    <property type="entry name" value="Ferrochelatase_N"/>
    <property type="match status" value="1"/>
</dbReference>
<dbReference type="FunFam" id="3.40.50.1400:FF:000002">
    <property type="entry name" value="Ferrochelatase"/>
    <property type="match status" value="1"/>
</dbReference>
<dbReference type="Gene3D" id="3.40.50.1400">
    <property type="match status" value="2"/>
</dbReference>
<dbReference type="HAMAP" id="MF_00323">
    <property type="entry name" value="Ferrochelatase"/>
    <property type="match status" value="1"/>
</dbReference>
<dbReference type="InterPro" id="IPR001015">
    <property type="entry name" value="Ferrochelatase"/>
</dbReference>
<dbReference type="InterPro" id="IPR019772">
    <property type="entry name" value="Ferrochelatase_AS"/>
</dbReference>
<dbReference type="InterPro" id="IPR033644">
    <property type="entry name" value="Ferrochelatase_C"/>
</dbReference>
<dbReference type="InterPro" id="IPR033659">
    <property type="entry name" value="Ferrochelatase_N"/>
</dbReference>
<dbReference type="NCBIfam" id="TIGR00109">
    <property type="entry name" value="hemH"/>
    <property type="match status" value="1"/>
</dbReference>
<dbReference type="PANTHER" id="PTHR11108">
    <property type="entry name" value="FERROCHELATASE"/>
    <property type="match status" value="1"/>
</dbReference>
<dbReference type="PANTHER" id="PTHR11108:SF1">
    <property type="entry name" value="FERROCHELATASE, MITOCHONDRIAL"/>
    <property type="match status" value="1"/>
</dbReference>
<dbReference type="Pfam" id="PF00762">
    <property type="entry name" value="Ferrochelatase"/>
    <property type="match status" value="1"/>
</dbReference>
<dbReference type="SUPFAM" id="SSF53800">
    <property type="entry name" value="Chelatase"/>
    <property type="match status" value="1"/>
</dbReference>
<dbReference type="PROSITE" id="PS00534">
    <property type="entry name" value="FERROCHELATASE"/>
    <property type="match status" value="1"/>
</dbReference>
<gene>
    <name evidence="1" type="primary">hemH</name>
    <name type="ordered locus">BB3938</name>
</gene>
<keyword id="KW-0963">Cytoplasm</keyword>
<keyword id="KW-0350">Heme biosynthesis</keyword>
<keyword id="KW-0408">Iron</keyword>
<keyword id="KW-0456">Lyase</keyword>
<keyword id="KW-0479">Metal-binding</keyword>
<keyword id="KW-0627">Porphyrin biosynthesis</keyword>
<evidence type="ECO:0000255" key="1">
    <source>
        <dbReference type="HAMAP-Rule" id="MF_00323"/>
    </source>
</evidence>
<reference key="1">
    <citation type="journal article" date="2003" name="Nat. Genet.">
        <title>Comparative analysis of the genome sequences of Bordetella pertussis, Bordetella parapertussis and Bordetella bronchiseptica.</title>
        <authorList>
            <person name="Parkhill J."/>
            <person name="Sebaihia M."/>
            <person name="Preston A."/>
            <person name="Murphy L.D."/>
            <person name="Thomson N.R."/>
            <person name="Harris D.E."/>
            <person name="Holden M.T.G."/>
            <person name="Churcher C.M."/>
            <person name="Bentley S.D."/>
            <person name="Mungall K.L."/>
            <person name="Cerdeno-Tarraga A.-M."/>
            <person name="Temple L."/>
            <person name="James K.D."/>
            <person name="Harris B."/>
            <person name="Quail M.A."/>
            <person name="Achtman M."/>
            <person name="Atkin R."/>
            <person name="Baker S."/>
            <person name="Basham D."/>
            <person name="Bason N."/>
            <person name="Cherevach I."/>
            <person name="Chillingworth T."/>
            <person name="Collins M."/>
            <person name="Cronin A."/>
            <person name="Davis P."/>
            <person name="Doggett J."/>
            <person name="Feltwell T."/>
            <person name="Goble A."/>
            <person name="Hamlin N."/>
            <person name="Hauser H."/>
            <person name="Holroyd S."/>
            <person name="Jagels K."/>
            <person name="Leather S."/>
            <person name="Moule S."/>
            <person name="Norberczak H."/>
            <person name="O'Neil S."/>
            <person name="Ormond D."/>
            <person name="Price C."/>
            <person name="Rabbinowitsch E."/>
            <person name="Rutter S."/>
            <person name="Sanders M."/>
            <person name="Saunders D."/>
            <person name="Seeger K."/>
            <person name="Sharp S."/>
            <person name="Simmonds M."/>
            <person name="Skelton J."/>
            <person name="Squares R."/>
            <person name="Squares S."/>
            <person name="Stevens K."/>
            <person name="Unwin L."/>
            <person name="Whitehead S."/>
            <person name="Barrell B.G."/>
            <person name="Maskell D.J."/>
        </authorList>
    </citation>
    <scope>NUCLEOTIDE SEQUENCE [LARGE SCALE GENOMIC DNA]</scope>
    <source>
        <strain>ATCC BAA-588 / NCTC 13252 / RB50</strain>
    </source>
</reference>
<feature type="chain" id="PRO_0000175116" description="Ferrochelatase">
    <location>
        <begin position="1"/>
        <end position="362"/>
    </location>
</feature>
<feature type="binding site" evidence="1">
    <location>
        <position position="228"/>
    </location>
    <ligand>
        <name>Fe cation</name>
        <dbReference type="ChEBI" id="CHEBI:24875"/>
    </ligand>
</feature>
<feature type="binding site" evidence="1">
    <location>
        <position position="309"/>
    </location>
    <ligand>
        <name>Fe cation</name>
        <dbReference type="ChEBI" id="CHEBI:24875"/>
    </ligand>
</feature>
<sequence length="362" mass="40890">MFLRLFKYLWPERYLPETPAQDPFDENPPPCGPGRVGVLLVNLGTPDEPTRGAIRRYLGEFLSDPRVIEIPRYLWMPILHGLVLAMRPKKLAPRYAGIWMEEGSPLLVYSQRQAAGVRQGLAARGVHAEVELAMRYGKPSIPAAITALRERGCDHILAVPLYPQYAASTTATVVDAVTRHAGRLRDQPALRFVKRFHNDPAYVEAQAGRIAEFWQAHGRPQKLVMSFHGLPRYSIELGDPYYRDCLDTARLLRERLGLREDEVEVTFQSRFGSARWLEPYTEPTLAELARQGVTEVDVVCPGFVADCLETLEEISQECRDAFVAAGGRQFRYIPALNDCPPWIEGLTDLVERQLRGWPTGNP</sequence>
<name>HEMH_BORBR</name>
<comment type="function">
    <text evidence="1">Catalyzes the ferrous insertion into protoporphyrin IX.</text>
</comment>
<comment type="catalytic activity">
    <reaction evidence="1">
        <text>heme b + 2 H(+) = protoporphyrin IX + Fe(2+)</text>
        <dbReference type="Rhea" id="RHEA:22584"/>
        <dbReference type="ChEBI" id="CHEBI:15378"/>
        <dbReference type="ChEBI" id="CHEBI:29033"/>
        <dbReference type="ChEBI" id="CHEBI:57306"/>
        <dbReference type="ChEBI" id="CHEBI:60344"/>
        <dbReference type="EC" id="4.98.1.1"/>
    </reaction>
</comment>
<comment type="pathway">
    <text evidence="1">Porphyrin-containing compound metabolism; protoheme biosynthesis; protoheme from protoporphyrin-IX: step 1/1.</text>
</comment>
<comment type="subcellular location">
    <subcellularLocation>
        <location evidence="1">Cytoplasm</location>
    </subcellularLocation>
</comment>
<comment type="similarity">
    <text evidence="1">Belongs to the ferrochelatase family.</text>
</comment>